<organism>
    <name type="scientific">Rhodopseudomonas palustris (strain HaA2)</name>
    <dbReference type="NCBI Taxonomy" id="316058"/>
    <lineage>
        <taxon>Bacteria</taxon>
        <taxon>Pseudomonadati</taxon>
        <taxon>Pseudomonadota</taxon>
        <taxon>Alphaproteobacteria</taxon>
        <taxon>Hyphomicrobiales</taxon>
        <taxon>Nitrobacteraceae</taxon>
        <taxon>Rhodopseudomonas</taxon>
    </lineage>
</organism>
<dbReference type="EC" id="4.1.1.48" evidence="1"/>
<dbReference type="EMBL" id="CP000250">
    <property type="protein sequence ID" value="ABD07500.1"/>
    <property type="molecule type" value="Genomic_DNA"/>
</dbReference>
<dbReference type="RefSeq" id="WP_011441685.1">
    <property type="nucleotide sequence ID" value="NC_007778.1"/>
</dbReference>
<dbReference type="SMR" id="Q2IWB0"/>
<dbReference type="STRING" id="316058.RPB_2798"/>
<dbReference type="KEGG" id="rpb:RPB_2798"/>
<dbReference type="eggNOG" id="COG0134">
    <property type="taxonomic scope" value="Bacteria"/>
</dbReference>
<dbReference type="HOGENOM" id="CLU_034247_2_0_5"/>
<dbReference type="OrthoDB" id="9804217at2"/>
<dbReference type="UniPathway" id="UPA00035">
    <property type="reaction ID" value="UER00043"/>
</dbReference>
<dbReference type="Proteomes" id="UP000008809">
    <property type="component" value="Chromosome"/>
</dbReference>
<dbReference type="GO" id="GO:0004425">
    <property type="term" value="F:indole-3-glycerol-phosphate synthase activity"/>
    <property type="evidence" value="ECO:0007669"/>
    <property type="project" value="UniProtKB-UniRule"/>
</dbReference>
<dbReference type="GO" id="GO:0004640">
    <property type="term" value="F:phosphoribosylanthranilate isomerase activity"/>
    <property type="evidence" value="ECO:0007669"/>
    <property type="project" value="TreeGrafter"/>
</dbReference>
<dbReference type="GO" id="GO:0000162">
    <property type="term" value="P:L-tryptophan biosynthetic process"/>
    <property type="evidence" value="ECO:0007669"/>
    <property type="project" value="UniProtKB-UniRule"/>
</dbReference>
<dbReference type="CDD" id="cd00331">
    <property type="entry name" value="IGPS"/>
    <property type="match status" value="1"/>
</dbReference>
<dbReference type="FunFam" id="3.20.20.70:FF:000024">
    <property type="entry name" value="Indole-3-glycerol phosphate synthase"/>
    <property type="match status" value="1"/>
</dbReference>
<dbReference type="Gene3D" id="3.20.20.70">
    <property type="entry name" value="Aldolase class I"/>
    <property type="match status" value="1"/>
</dbReference>
<dbReference type="HAMAP" id="MF_00134_B">
    <property type="entry name" value="IGPS_B"/>
    <property type="match status" value="1"/>
</dbReference>
<dbReference type="InterPro" id="IPR013785">
    <property type="entry name" value="Aldolase_TIM"/>
</dbReference>
<dbReference type="InterPro" id="IPR045186">
    <property type="entry name" value="Indole-3-glycerol_P_synth"/>
</dbReference>
<dbReference type="InterPro" id="IPR013798">
    <property type="entry name" value="Indole-3-glycerol_P_synth_dom"/>
</dbReference>
<dbReference type="InterPro" id="IPR001468">
    <property type="entry name" value="Indole-3-GlycerolPSynthase_CS"/>
</dbReference>
<dbReference type="InterPro" id="IPR011060">
    <property type="entry name" value="RibuloseP-bd_barrel"/>
</dbReference>
<dbReference type="NCBIfam" id="NF001370">
    <property type="entry name" value="PRK00278.1-2"/>
    <property type="match status" value="1"/>
</dbReference>
<dbReference type="NCBIfam" id="NF001373">
    <property type="entry name" value="PRK00278.1-6"/>
    <property type="match status" value="1"/>
</dbReference>
<dbReference type="NCBIfam" id="NF001377">
    <property type="entry name" value="PRK00278.2-4"/>
    <property type="match status" value="1"/>
</dbReference>
<dbReference type="PANTHER" id="PTHR22854:SF2">
    <property type="entry name" value="INDOLE-3-GLYCEROL-PHOSPHATE SYNTHASE"/>
    <property type="match status" value="1"/>
</dbReference>
<dbReference type="PANTHER" id="PTHR22854">
    <property type="entry name" value="TRYPTOPHAN BIOSYNTHESIS PROTEIN"/>
    <property type="match status" value="1"/>
</dbReference>
<dbReference type="Pfam" id="PF00218">
    <property type="entry name" value="IGPS"/>
    <property type="match status" value="1"/>
</dbReference>
<dbReference type="SUPFAM" id="SSF51366">
    <property type="entry name" value="Ribulose-phoshate binding barrel"/>
    <property type="match status" value="1"/>
</dbReference>
<dbReference type="PROSITE" id="PS00614">
    <property type="entry name" value="IGPS"/>
    <property type="match status" value="1"/>
</dbReference>
<sequence length="265" mass="28637">MSDILTKIEAYKREEIAAAKRERPIASLEADARAAPPPRGFVRALRAKHAAGDYALIAEIKKASPSKGLIRADFDPPALAQAYEQGGAACLSVLTDTPSFQGSLDYLVAARAAVSLPALRKDFMYDTYQVVEARAHGADCILIIMAALDDAEARDIEDAAFDLGMDVLLEVHDRAELDRALQLRSPMIGVNNRNLRTFEVTLATSEALAPLIPKDRLMVGESGIFTPDDLARLARVGMSTFLVGESLMRQEDVATATRALLARAA</sequence>
<comment type="catalytic activity">
    <reaction evidence="1">
        <text>1-(2-carboxyphenylamino)-1-deoxy-D-ribulose 5-phosphate + H(+) = (1S,2R)-1-C-(indol-3-yl)glycerol 3-phosphate + CO2 + H2O</text>
        <dbReference type="Rhea" id="RHEA:23476"/>
        <dbReference type="ChEBI" id="CHEBI:15377"/>
        <dbReference type="ChEBI" id="CHEBI:15378"/>
        <dbReference type="ChEBI" id="CHEBI:16526"/>
        <dbReference type="ChEBI" id="CHEBI:58613"/>
        <dbReference type="ChEBI" id="CHEBI:58866"/>
        <dbReference type="EC" id="4.1.1.48"/>
    </reaction>
</comment>
<comment type="pathway">
    <text evidence="1">Amino-acid biosynthesis; L-tryptophan biosynthesis; L-tryptophan from chorismate: step 4/5.</text>
</comment>
<comment type="similarity">
    <text evidence="1">Belongs to the TrpC family.</text>
</comment>
<keyword id="KW-0028">Amino-acid biosynthesis</keyword>
<keyword id="KW-0057">Aromatic amino acid biosynthesis</keyword>
<keyword id="KW-0210">Decarboxylase</keyword>
<keyword id="KW-0456">Lyase</keyword>
<keyword id="KW-1185">Reference proteome</keyword>
<keyword id="KW-0822">Tryptophan biosynthesis</keyword>
<reference key="1">
    <citation type="submission" date="2006-01" db="EMBL/GenBank/DDBJ databases">
        <title>Complete sequence of Rhodopseudomonas palustris HaA2.</title>
        <authorList>
            <consortium name="US DOE Joint Genome Institute"/>
            <person name="Copeland A."/>
            <person name="Lucas S."/>
            <person name="Lapidus A."/>
            <person name="Barry K."/>
            <person name="Detter J.C."/>
            <person name="Glavina T."/>
            <person name="Hammon N."/>
            <person name="Israni S."/>
            <person name="Pitluck S."/>
            <person name="Chain P."/>
            <person name="Malfatti S."/>
            <person name="Shin M."/>
            <person name="Vergez L."/>
            <person name="Schmutz J."/>
            <person name="Larimer F."/>
            <person name="Land M."/>
            <person name="Hauser L."/>
            <person name="Pelletier D.A."/>
            <person name="Kyrpides N."/>
            <person name="Anderson I."/>
            <person name="Oda Y."/>
            <person name="Harwood C.S."/>
            <person name="Richardson P."/>
        </authorList>
    </citation>
    <scope>NUCLEOTIDE SEQUENCE [LARGE SCALE GENOMIC DNA]</scope>
    <source>
        <strain>HaA2</strain>
    </source>
</reference>
<proteinExistence type="inferred from homology"/>
<protein>
    <recommendedName>
        <fullName evidence="1">Indole-3-glycerol phosphate synthase</fullName>
        <shortName evidence="1">IGPS</shortName>
        <ecNumber evidence="1">4.1.1.48</ecNumber>
    </recommendedName>
</protein>
<evidence type="ECO:0000255" key="1">
    <source>
        <dbReference type="HAMAP-Rule" id="MF_00134"/>
    </source>
</evidence>
<gene>
    <name evidence="1" type="primary">trpC</name>
    <name type="ordered locus">RPB_2798</name>
</gene>
<feature type="chain" id="PRO_1000018543" description="Indole-3-glycerol phosphate synthase">
    <location>
        <begin position="1"/>
        <end position="265"/>
    </location>
</feature>
<accession>Q2IWB0</accession>
<name>TRPC_RHOP2</name>